<sequence length="178" mass="21084">MKKRGKKPELDWETEEQEEIIWVSKSEIKRDAEELKKLGAKLVDLTKTNLDKIPLDGNLLEAVELARRSVKEAKRRQLQYIGKLLRNTDVEPIRDALDKIENKHNQQQAMLHKLELMRDELVSKGDEGLVALLIDYPQMDRRHLRNLIRSAQKEKEQNKPPKAYREIYQYLKDFIIEE</sequence>
<accession>Q65US2</accession>
<organism>
    <name type="scientific">Mannheimia succiniciproducens (strain KCTC 0769BP / MBEL55E)</name>
    <dbReference type="NCBI Taxonomy" id="221988"/>
    <lineage>
        <taxon>Bacteria</taxon>
        <taxon>Pseudomonadati</taxon>
        <taxon>Pseudomonadota</taxon>
        <taxon>Gammaproteobacteria</taxon>
        <taxon>Pasteurellales</taxon>
        <taxon>Pasteurellaceae</taxon>
        <taxon>Basfia</taxon>
    </lineage>
</organism>
<keyword id="KW-0963">Cytoplasm</keyword>
<keyword id="KW-0690">Ribosome biogenesis</keyword>
<keyword id="KW-0694">RNA-binding</keyword>
<keyword id="KW-0699">rRNA-binding</keyword>
<proteinExistence type="inferred from homology"/>
<gene>
    <name evidence="1" type="primary">darP</name>
    <name type="ordered locus">MS0681</name>
</gene>
<evidence type="ECO:0000255" key="1">
    <source>
        <dbReference type="HAMAP-Rule" id="MF_00765"/>
    </source>
</evidence>
<protein>
    <recommendedName>
        <fullName evidence="1">Dual-action ribosomal maturation protein DarP</fullName>
    </recommendedName>
    <alternativeName>
        <fullName evidence="1">Large ribosomal subunit assembly factor DarP</fullName>
    </alternativeName>
</protein>
<dbReference type="EMBL" id="AE016827">
    <property type="protein sequence ID" value="AAU37288.1"/>
    <property type="molecule type" value="Genomic_DNA"/>
</dbReference>
<dbReference type="RefSeq" id="WP_011199860.1">
    <property type="nucleotide sequence ID" value="NC_006300.1"/>
</dbReference>
<dbReference type="SMR" id="Q65US2"/>
<dbReference type="STRING" id="221988.MS0681"/>
<dbReference type="KEGG" id="msu:MS0681"/>
<dbReference type="eggNOG" id="COG3028">
    <property type="taxonomic scope" value="Bacteria"/>
</dbReference>
<dbReference type="HOGENOM" id="CLU_106757_2_0_6"/>
<dbReference type="OrthoDB" id="5293604at2"/>
<dbReference type="Proteomes" id="UP000000607">
    <property type="component" value="Chromosome"/>
</dbReference>
<dbReference type="GO" id="GO:0005829">
    <property type="term" value="C:cytosol"/>
    <property type="evidence" value="ECO:0007669"/>
    <property type="project" value="TreeGrafter"/>
</dbReference>
<dbReference type="GO" id="GO:0043022">
    <property type="term" value="F:ribosome binding"/>
    <property type="evidence" value="ECO:0007669"/>
    <property type="project" value="UniProtKB-UniRule"/>
</dbReference>
<dbReference type="GO" id="GO:0019843">
    <property type="term" value="F:rRNA binding"/>
    <property type="evidence" value="ECO:0007669"/>
    <property type="project" value="UniProtKB-UniRule"/>
</dbReference>
<dbReference type="GO" id="GO:1902626">
    <property type="term" value="P:assembly of large subunit precursor of preribosome"/>
    <property type="evidence" value="ECO:0007669"/>
    <property type="project" value="UniProtKB-UniRule"/>
</dbReference>
<dbReference type="CDD" id="cd16331">
    <property type="entry name" value="YjgA-like"/>
    <property type="match status" value="1"/>
</dbReference>
<dbReference type="Gene3D" id="1.10.60.30">
    <property type="entry name" value="PSPTO4464-like domains"/>
    <property type="match status" value="2"/>
</dbReference>
<dbReference type="HAMAP" id="MF_00765">
    <property type="entry name" value="DarP"/>
    <property type="match status" value="1"/>
</dbReference>
<dbReference type="InterPro" id="IPR006839">
    <property type="entry name" value="DarP"/>
</dbReference>
<dbReference type="InterPro" id="IPR023153">
    <property type="entry name" value="DarP_sf"/>
</dbReference>
<dbReference type="NCBIfam" id="NF003593">
    <property type="entry name" value="PRK05255.1-1"/>
    <property type="match status" value="1"/>
</dbReference>
<dbReference type="PANTHER" id="PTHR38101">
    <property type="entry name" value="UPF0307 PROTEIN YJGA"/>
    <property type="match status" value="1"/>
</dbReference>
<dbReference type="PANTHER" id="PTHR38101:SF1">
    <property type="entry name" value="UPF0307 PROTEIN YJGA"/>
    <property type="match status" value="1"/>
</dbReference>
<dbReference type="Pfam" id="PF04751">
    <property type="entry name" value="DarP"/>
    <property type="match status" value="1"/>
</dbReference>
<dbReference type="PIRSF" id="PIRSF016183">
    <property type="entry name" value="UCP016183"/>
    <property type="match status" value="1"/>
</dbReference>
<dbReference type="SUPFAM" id="SSF158710">
    <property type="entry name" value="PSPTO4464-like"/>
    <property type="match status" value="1"/>
</dbReference>
<reference key="1">
    <citation type="journal article" date="2004" name="Nat. Biotechnol.">
        <title>The genome sequence of the capnophilic rumen bacterium Mannheimia succiniciproducens.</title>
        <authorList>
            <person name="Hong S.H."/>
            <person name="Kim J.S."/>
            <person name="Lee S.Y."/>
            <person name="In Y.H."/>
            <person name="Choi S.S."/>
            <person name="Rih J.-K."/>
            <person name="Kim C.H."/>
            <person name="Jeong H."/>
            <person name="Hur C.G."/>
            <person name="Kim J.J."/>
        </authorList>
    </citation>
    <scope>NUCLEOTIDE SEQUENCE [LARGE SCALE GENOMIC DNA]</scope>
    <source>
        <strain>KCTC 0769BP / MBEL55E</strain>
    </source>
</reference>
<feature type="chain" id="PRO_0000257631" description="Dual-action ribosomal maturation protein DarP">
    <location>
        <begin position="1"/>
        <end position="178"/>
    </location>
</feature>
<name>DARP_MANSM</name>
<comment type="function">
    <text evidence="1">Member of a network of 50S ribosomal subunit biogenesis factors which assembles along the 30S-50S interface, preventing incorrect 23S rRNA structures from forming. Promotes peptidyl transferase center (PTC) maturation.</text>
</comment>
<comment type="subcellular location">
    <subcellularLocation>
        <location evidence="1">Cytoplasm</location>
    </subcellularLocation>
    <text evidence="1">Associates with late stage pre-50S ribosomal subunits.</text>
</comment>
<comment type="similarity">
    <text evidence="1">Belongs to the DarP family.</text>
</comment>